<dbReference type="EMBL" id="CP000903">
    <property type="protein sequence ID" value="ABY41720.1"/>
    <property type="molecule type" value="Genomic_DNA"/>
</dbReference>
<dbReference type="RefSeq" id="WP_002125074.1">
    <property type="nucleotide sequence ID" value="NC_010184.1"/>
</dbReference>
<dbReference type="SMR" id="A9VST4"/>
<dbReference type="KEGG" id="bwe:BcerKBAB4_0454"/>
<dbReference type="eggNOG" id="ENOG50313Y4">
    <property type="taxonomic scope" value="Bacteria"/>
</dbReference>
<dbReference type="HOGENOM" id="CLU_143991_0_0_9"/>
<dbReference type="Proteomes" id="UP000002154">
    <property type="component" value="Chromosome"/>
</dbReference>
<dbReference type="GO" id="GO:0005886">
    <property type="term" value="C:plasma membrane"/>
    <property type="evidence" value="ECO:0007669"/>
    <property type="project" value="UniProtKB-SubCell"/>
</dbReference>
<dbReference type="HAMAP" id="MF_01502">
    <property type="entry name" value="UPF0295"/>
    <property type="match status" value="1"/>
</dbReference>
<dbReference type="InterPro" id="IPR020912">
    <property type="entry name" value="UPF0295"/>
</dbReference>
<dbReference type="NCBIfam" id="NF002796">
    <property type="entry name" value="PRK02935.1"/>
    <property type="match status" value="1"/>
</dbReference>
<dbReference type="Pfam" id="PF11023">
    <property type="entry name" value="DUF2614"/>
    <property type="match status" value="1"/>
</dbReference>
<organism>
    <name type="scientific">Bacillus mycoides (strain KBAB4)</name>
    <name type="common">Bacillus weihenstephanensis</name>
    <dbReference type="NCBI Taxonomy" id="315730"/>
    <lineage>
        <taxon>Bacteria</taxon>
        <taxon>Bacillati</taxon>
        <taxon>Bacillota</taxon>
        <taxon>Bacilli</taxon>
        <taxon>Bacillales</taxon>
        <taxon>Bacillaceae</taxon>
        <taxon>Bacillus</taxon>
        <taxon>Bacillus cereus group</taxon>
    </lineage>
</organism>
<comment type="subcellular location">
    <subcellularLocation>
        <location evidence="1">Cell membrane</location>
        <topology evidence="1">Multi-pass membrane protein</topology>
    </subcellularLocation>
</comment>
<comment type="similarity">
    <text evidence="1">Belongs to the UPF0295 family.</text>
</comment>
<evidence type="ECO:0000255" key="1">
    <source>
        <dbReference type="HAMAP-Rule" id="MF_01502"/>
    </source>
</evidence>
<sequence length="118" mass="13526">MGIKYSNKINKIRTFALSLVFIGLFIAYLGVFFRENIIIMTTFMMVGFLAVIASTVVYFWIGMLSTKTIQIICPSCDKPTKMLGRVDACMHCNQPLTLDRNLEGKEFDEKYNKKSYKS</sequence>
<accession>A9VST4</accession>
<proteinExistence type="inferred from homology"/>
<feature type="chain" id="PRO_0000346311" description="UPF0295 protein BcerKBAB4_0454">
    <location>
        <begin position="1"/>
        <end position="118"/>
    </location>
</feature>
<feature type="transmembrane region" description="Helical" evidence="1">
    <location>
        <begin position="12"/>
        <end position="32"/>
    </location>
</feature>
<feature type="transmembrane region" description="Helical" evidence="1">
    <location>
        <begin position="43"/>
        <end position="63"/>
    </location>
</feature>
<keyword id="KW-1003">Cell membrane</keyword>
<keyword id="KW-0472">Membrane</keyword>
<keyword id="KW-0812">Transmembrane</keyword>
<keyword id="KW-1133">Transmembrane helix</keyword>
<name>Y454_BACMK</name>
<gene>
    <name type="ordered locus">BcerKBAB4_0454</name>
</gene>
<protein>
    <recommendedName>
        <fullName evidence="1">UPF0295 protein BcerKBAB4_0454</fullName>
    </recommendedName>
</protein>
<reference key="1">
    <citation type="journal article" date="2008" name="Chem. Biol. Interact.">
        <title>Extending the Bacillus cereus group genomics to putative food-borne pathogens of different toxicity.</title>
        <authorList>
            <person name="Lapidus A."/>
            <person name="Goltsman E."/>
            <person name="Auger S."/>
            <person name="Galleron N."/>
            <person name="Segurens B."/>
            <person name="Dossat C."/>
            <person name="Land M.L."/>
            <person name="Broussolle V."/>
            <person name="Brillard J."/>
            <person name="Guinebretiere M.-H."/>
            <person name="Sanchis V."/>
            <person name="Nguen-the C."/>
            <person name="Lereclus D."/>
            <person name="Richardson P."/>
            <person name="Wincker P."/>
            <person name="Weissenbach J."/>
            <person name="Ehrlich S.D."/>
            <person name="Sorokin A."/>
        </authorList>
    </citation>
    <scope>NUCLEOTIDE SEQUENCE [LARGE SCALE GENOMIC DNA]</scope>
    <source>
        <strain>KBAB4</strain>
    </source>
</reference>